<proteinExistence type="inferred from homology"/>
<reference key="1">
    <citation type="journal article" date="2012" name="Stand. Genomic Sci.">
        <title>Complete genome sequence of Polynucleobacter necessarius subsp. asymbioticus type strain (QLW-P1DMWA-1(T)).</title>
        <authorList>
            <person name="Meincke L."/>
            <person name="Copeland A."/>
            <person name="Lapidus A."/>
            <person name="Lucas S."/>
            <person name="Berry K.W."/>
            <person name="Del Rio T.G."/>
            <person name="Hammon N."/>
            <person name="Dalin E."/>
            <person name="Tice H."/>
            <person name="Pitluck S."/>
            <person name="Richardson P."/>
            <person name="Bruce D."/>
            <person name="Goodwin L."/>
            <person name="Han C."/>
            <person name="Tapia R."/>
            <person name="Detter J.C."/>
            <person name="Schmutz J."/>
            <person name="Brettin T."/>
            <person name="Larimer F."/>
            <person name="Land M."/>
            <person name="Hauser L."/>
            <person name="Kyrpides N.C."/>
            <person name="Ivanova N."/>
            <person name="Goker M."/>
            <person name="Woyke T."/>
            <person name="Wu Q.L."/>
            <person name="Pockl M."/>
            <person name="Hahn M.W."/>
            <person name="Klenk H.P."/>
        </authorList>
    </citation>
    <scope>NUCLEOTIDE SEQUENCE [LARGE SCALE GENOMIC DNA]</scope>
    <source>
        <strain>DSM 18221 / CIP 109841 / QLW-P1DMWA-1</strain>
    </source>
</reference>
<feature type="chain" id="PRO_0000367199" description="UPF0173 metal-dependent hydrolase Pnuc_1524">
    <location>
        <begin position="1"/>
        <end position="285"/>
    </location>
</feature>
<protein>
    <recommendedName>
        <fullName evidence="1">UPF0173 metal-dependent hydrolase Pnuc_1524</fullName>
    </recommendedName>
</protein>
<keyword id="KW-0378">Hydrolase</keyword>
<keyword id="KW-1185">Reference proteome</keyword>
<evidence type="ECO:0000255" key="1">
    <source>
        <dbReference type="HAMAP-Rule" id="MF_00457"/>
    </source>
</evidence>
<gene>
    <name type="ordered locus">Pnuc_1524</name>
</gene>
<dbReference type="EMBL" id="CP000655">
    <property type="protein sequence ID" value="ABP34738.1"/>
    <property type="molecule type" value="Genomic_DNA"/>
</dbReference>
<dbReference type="RefSeq" id="WP_011903361.1">
    <property type="nucleotide sequence ID" value="NC_009379.1"/>
</dbReference>
<dbReference type="SMR" id="A4SZ24"/>
<dbReference type="GeneID" id="31481915"/>
<dbReference type="KEGG" id="pnu:Pnuc_1524"/>
<dbReference type="eggNOG" id="COG2220">
    <property type="taxonomic scope" value="Bacteria"/>
</dbReference>
<dbReference type="HOGENOM" id="CLU_070010_4_0_4"/>
<dbReference type="Proteomes" id="UP000000231">
    <property type="component" value="Chromosome"/>
</dbReference>
<dbReference type="GO" id="GO:0016787">
    <property type="term" value="F:hydrolase activity"/>
    <property type="evidence" value="ECO:0007669"/>
    <property type="project" value="UniProtKB-UniRule"/>
</dbReference>
<dbReference type="Gene3D" id="3.60.15.10">
    <property type="entry name" value="Ribonuclease Z/Hydroxyacylglutathione hydrolase-like"/>
    <property type="match status" value="1"/>
</dbReference>
<dbReference type="HAMAP" id="MF_00457">
    <property type="entry name" value="UPF0173"/>
    <property type="match status" value="1"/>
</dbReference>
<dbReference type="InterPro" id="IPR001279">
    <property type="entry name" value="Metallo-B-lactamas"/>
</dbReference>
<dbReference type="InterPro" id="IPR036866">
    <property type="entry name" value="RibonucZ/Hydroxyglut_hydro"/>
</dbReference>
<dbReference type="InterPro" id="IPR022877">
    <property type="entry name" value="UPF0173"/>
</dbReference>
<dbReference type="InterPro" id="IPR050114">
    <property type="entry name" value="UPF0173_UPF0282_UlaG_hydrolase"/>
</dbReference>
<dbReference type="NCBIfam" id="NF001911">
    <property type="entry name" value="PRK00685.1"/>
    <property type="match status" value="1"/>
</dbReference>
<dbReference type="PANTHER" id="PTHR43546:SF3">
    <property type="entry name" value="UPF0173 METAL-DEPENDENT HYDROLASE MJ1163"/>
    <property type="match status" value="1"/>
</dbReference>
<dbReference type="PANTHER" id="PTHR43546">
    <property type="entry name" value="UPF0173 METAL-DEPENDENT HYDROLASE MJ1163-RELATED"/>
    <property type="match status" value="1"/>
</dbReference>
<dbReference type="Pfam" id="PF12706">
    <property type="entry name" value="Lactamase_B_2"/>
    <property type="match status" value="1"/>
</dbReference>
<dbReference type="SMART" id="SM00849">
    <property type="entry name" value="Lactamase_B"/>
    <property type="match status" value="1"/>
</dbReference>
<dbReference type="SUPFAM" id="SSF56281">
    <property type="entry name" value="Metallo-hydrolase/oxidoreductase"/>
    <property type="match status" value="1"/>
</dbReference>
<organism>
    <name type="scientific">Polynucleobacter asymbioticus (strain DSM 18221 / CIP 109841 / QLW-P1DMWA-1)</name>
    <name type="common">Polynucleobacter necessarius subsp. asymbioticus</name>
    <dbReference type="NCBI Taxonomy" id="312153"/>
    <lineage>
        <taxon>Bacteria</taxon>
        <taxon>Pseudomonadati</taxon>
        <taxon>Pseudomonadota</taxon>
        <taxon>Betaproteobacteria</taxon>
        <taxon>Burkholderiales</taxon>
        <taxon>Burkholderiaceae</taxon>
        <taxon>Polynucleobacter</taxon>
    </lineage>
</organism>
<sequence>MVNILKKRAFGGAILAALLLASSAYVGAQSAPAAGAQGKTELLWFGQAGFRIKTPQGKMILIDPWITGGPKTPPMYKNDLAAIGPIDLLLVTHAHVDHLGDAPTIAKTNNTKLYGPADMVTPLTTLGVLPAELGYRFNKTGQVTPLPGIKVTAVQAEHSSLLVWKNPATDKLESHPAGEPMGYIIELENGFKIWHMGDTGLFSDMKFISEHYKPDLVLIPIGGNFTMAPDDAAYALRTWVKPKMVIPMHYNSNPMTKGTLAEFQAAMKGSNIKVIPMTEGETVQF</sequence>
<accession>A4SZ24</accession>
<comment type="similarity">
    <text evidence="1">Belongs to the UPF0173 family.</text>
</comment>
<name>Y1524_POLAQ</name>